<accession>Q5E3S7</accession>
<comment type="function">
    <text evidence="1">Part of the ABC transporter complex CcmAB involved in the biogenesis of c-type cytochromes; once thought to export heme, this seems not to be the case, but its exact role is uncertain. Responsible for energy coupling to the transport system.</text>
</comment>
<comment type="catalytic activity">
    <reaction evidence="1">
        <text>heme b(in) + ATP + H2O = heme b(out) + ADP + phosphate + H(+)</text>
        <dbReference type="Rhea" id="RHEA:19261"/>
        <dbReference type="ChEBI" id="CHEBI:15377"/>
        <dbReference type="ChEBI" id="CHEBI:15378"/>
        <dbReference type="ChEBI" id="CHEBI:30616"/>
        <dbReference type="ChEBI" id="CHEBI:43474"/>
        <dbReference type="ChEBI" id="CHEBI:60344"/>
        <dbReference type="ChEBI" id="CHEBI:456216"/>
        <dbReference type="EC" id="7.6.2.5"/>
    </reaction>
</comment>
<comment type="subunit">
    <text evidence="1">The complex is composed of two ATP-binding proteins (CcmA) and two transmembrane proteins (CcmB).</text>
</comment>
<comment type="subcellular location">
    <subcellularLocation>
        <location evidence="1">Cell inner membrane</location>
        <topology evidence="1">Peripheral membrane protein</topology>
    </subcellularLocation>
</comment>
<comment type="similarity">
    <text evidence="1">Belongs to the ABC transporter superfamily. CcmA exporter (TC 3.A.1.107) family.</text>
</comment>
<name>CCMA_ALIF1</name>
<reference key="1">
    <citation type="journal article" date="2005" name="Proc. Natl. Acad. Sci. U.S.A.">
        <title>Complete genome sequence of Vibrio fischeri: a symbiotic bacterium with pathogenic congeners.</title>
        <authorList>
            <person name="Ruby E.G."/>
            <person name="Urbanowski M."/>
            <person name="Campbell J."/>
            <person name="Dunn A."/>
            <person name="Faini M."/>
            <person name="Gunsalus R."/>
            <person name="Lostroh P."/>
            <person name="Lupp C."/>
            <person name="McCann J."/>
            <person name="Millikan D."/>
            <person name="Schaefer A."/>
            <person name="Stabb E."/>
            <person name="Stevens A."/>
            <person name="Visick K."/>
            <person name="Whistler C."/>
            <person name="Greenberg E.P."/>
        </authorList>
    </citation>
    <scope>NUCLEOTIDE SEQUENCE [LARGE SCALE GENOMIC DNA]</scope>
    <source>
        <strain>ATCC 700601 / ES114</strain>
    </source>
</reference>
<proteinExistence type="inferred from homology"/>
<feature type="chain" id="PRO_0000271965" description="Cytochrome c biogenesis ATP-binding export protein CcmA">
    <location>
        <begin position="1"/>
        <end position="204"/>
    </location>
</feature>
<feature type="domain" description="ABC transporter" evidence="1">
    <location>
        <begin position="2"/>
        <end position="202"/>
    </location>
</feature>
<feature type="binding site" evidence="1">
    <location>
        <begin position="34"/>
        <end position="41"/>
    </location>
    <ligand>
        <name>ATP</name>
        <dbReference type="ChEBI" id="CHEBI:30616"/>
    </ligand>
</feature>
<dbReference type="EC" id="7.6.2.5" evidence="1"/>
<dbReference type="EMBL" id="CP000020">
    <property type="protein sequence ID" value="AAW86319.1"/>
    <property type="molecule type" value="Genomic_DNA"/>
</dbReference>
<dbReference type="RefSeq" id="WP_005420299.1">
    <property type="nucleotide sequence ID" value="NC_006840.2"/>
</dbReference>
<dbReference type="RefSeq" id="YP_205207.1">
    <property type="nucleotide sequence ID" value="NC_006840.2"/>
</dbReference>
<dbReference type="SMR" id="Q5E3S7"/>
<dbReference type="STRING" id="312309.VF_1824"/>
<dbReference type="EnsemblBacteria" id="AAW86319">
    <property type="protein sequence ID" value="AAW86319"/>
    <property type="gene ID" value="VF_1824"/>
</dbReference>
<dbReference type="GeneID" id="92895801"/>
<dbReference type="KEGG" id="vfi:VF_1824"/>
<dbReference type="PATRIC" id="fig|312309.11.peg.1852"/>
<dbReference type="eggNOG" id="COG4133">
    <property type="taxonomic scope" value="Bacteria"/>
</dbReference>
<dbReference type="HOGENOM" id="CLU_000604_1_2_6"/>
<dbReference type="OrthoDB" id="9800654at2"/>
<dbReference type="Proteomes" id="UP000000537">
    <property type="component" value="Chromosome I"/>
</dbReference>
<dbReference type="GO" id="GO:0005886">
    <property type="term" value="C:plasma membrane"/>
    <property type="evidence" value="ECO:0007669"/>
    <property type="project" value="UniProtKB-SubCell"/>
</dbReference>
<dbReference type="GO" id="GO:0015439">
    <property type="term" value="F:ABC-type heme transporter activity"/>
    <property type="evidence" value="ECO:0007669"/>
    <property type="project" value="UniProtKB-EC"/>
</dbReference>
<dbReference type="GO" id="GO:0005524">
    <property type="term" value="F:ATP binding"/>
    <property type="evidence" value="ECO:0007669"/>
    <property type="project" value="UniProtKB-KW"/>
</dbReference>
<dbReference type="GO" id="GO:0016887">
    <property type="term" value="F:ATP hydrolysis activity"/>
    <property type="evidence" value="ECO:0007669"/>
    <property type="project" value="InterPro"/>
</dbReference>
<dbReference type="GO" id="GO:0017004">
    <property type="term" value="P:cytochrome complex assembly"/>
    <property type="evidence" value="ECO:0007669"/>
    <property type="project" value="UniProtKB-KW"/>
</dbReference>
<dbReference type="CDD" id="cd03231">
    <property type="entry name" value="ABC_CcmA_heme_exporter"/>
    <property type="match status" value="1"/>
</dbReference>
<dbReference type="Gene3D" id="3.40.50.300">
    <property type="entry name" value="P-loop containing nucleotide triphosphate hydrolases"/>
    <property type="match status" value="1"/>
</dbReference>
<dbReference type="InterPro" id="IPR003593">
    <property type="entry name" value="AAA+_ATPase"/>
</dbReference>
<dbReference type="InterPro" id="IPR003439">
    <property type="entry name" value="ABC_transporter-like_ATP-bd"/>
</dbReference>
<dbReference type="InterPro" id="IPR017871">
    <property type="entry name" value="ABC_transporter-like_CS"/>
</dbReference>
<dbReference type="InterPro" id="IPR005895">
    <property type="entry name" value="ABC_transptr_haem_export_CcmA"/>
</dbReference>
<dbReference type="InterPro" id="IPR027417">
    <property type="entry name" value="P-loop_NTPase"/>
</dbReference>
<dbReference type="NCBIfam" id="TIGR01189">
    <property type="entry name" value="ccmA"/>
    <property type="match status" value="1"/>
</dbReference>
<dbReference type="NCBIfam" id="NF010061">
    <property type="entry name" value="PRK13538.1"/>
    <property type="match status" value="1"/>
</dbReference>
<dbReference type="PANTHER" id="PTHR43499">
    <property type="entry name" value="ABC TRANSPORTER I FAMILY MEMBER 1"/>
    <property type="match status" value="1"/>
</dbReference>
<dbReference type="PANTHER" id="PTHR43499:SF1">
    <property type="entry name" value="ABC TRANSPORTER I FAMILY MEMBER 1"/>
    <property type="match status" value="1"/>
</dbReference>
<dbReference type="Pfam" id="PF00005">
    <property type="entry name" value="ABC_tran"/>
    <property type="match status" value="1"/>
</dbReference>
<dbReference type="SMART" id="SM00382">
    <property type="entry name" value="AAA"/>
    <property type="match status" value="1"/>
</dbReference>
<dbReference type="SUPFAM" id="SSF52540">
    <property type="entry name" value="P-loop containing nucleoside triphosphate hydrolases"/>
    <property type="match status" value="1"/>
</dbReference>
<dbReference type="PROSITE" id="PS00211">
    <property type="entry name" value="ABC_TRANSPORTER_1"/>
    <property type="match status" value="1"/>
</dbReference>
<dbReference type="PROSITE" id="PS50893">
    <property type="entry name" value="ABC_TRANSPORTER_2"/>
    <property type="match status" value="1"/>
</dbReference>
<dbReference type="PROSITE" id="PS51243">
    <property type="entry name" value="CCMA"/>
    <property type="match status" value="1"/>
</dbReference>
<organism>
    <name type="scientific">Aliivibrio fischeri (strain ATCC 700601 / ES114)</name>
    <name type="common">Vibrio fischeri</name>
    <dbReference type="NCBI Taxonomy" id="312309"/>
    <lineage>
        <taxon>Bacteria</taxon>
        <taxon>Pseudomonadati</taxon>
        <taxon>Pseudomonadota</taxon>
        <taxon>Gammaproteobacteria</taxon>
        <taxon>Vibrionales</taxon>
        <taxon>Vibrionaceae</taxon>
        <taxon>Aliivibrio</taxon>
    </lineage>
</organism>
<keyword id="KW-0067">ATP-binding</keyword>
<keyword id="KW-0997">Cell inner membrane</keyword>
<keyword id="KW-1003">Cell membrane</keyword>
<keyword id="KW-0201">Cytochrome c-type biogenesis</keyword>
<keyword id="KW-0472">Membrane</keyword>
<keyword id="KW-0547">Nucleotide-binding</keyword>
<keyword id="KW-1185">Reference proteome</keyword>
<keyword id="KW-1278">Translocase</keyword>
<keyword id="KW-0813">Transport</keyword>
<protein>
    <recommendedName>
        <fullName evidence="1">Cytochrome c biogenesis ATP-binding export protein CcmA</fullName>
        <ecNumber evidence="1">7.6.2.5</ecNumber>
    </recommendedName>
    <alternativeName>
        <fullName evidence="1">Heme exporter protein A</fullName>
    </alternativeName>
</protein>
<gene>
    <name evidence="1" type="primary">ccmA</name>
    <name type="ordered locus">VF_1824</name>
</gene>
<sequence>MLEIRNVTCIRDERVLFERLNFTISDGELIQIEGQNGAGKTTLLRIIAGLGYADEGDIFWKNESIKQNREEFHSDLLFLGHHTGVKRELTAFENLAFYQSMHDNYNEAAIWDALARVGLAGREDVAAGQLSAGQQRRVALARLWLSNHKLWILDEPLTAIDKQGVKVLEKLFMDHAKQGGIVLLTTHQDLFIDSNELKKIRLGE</sequence>
<evidence type="ECO:0000255" key="1">
    <source>
        <dbReference type="HAMAP-Rule" id="MF_01707"/>
    </source>
</evidence>